<accession>Q94AB5</accession>
<accession>Q9SNB2</accession>
<name>U7E12_ARATH</name>
<keyword id="KW-0328">Glycosyltransferase</keyword>
<keyword id="KW-1185">Reference proteome</keyword>
<keyword id="KW-0808">Transferase</keyword>
<comment type="function">
    <text evidence="3">Possesses quercetin 3-O-glucosyltransferase and 7-O-glucosyltransferase activities in vitro.</text>
</comment>
<comment type="catalytic activity">
    <reaction evidence="3">
        <text>a flavonol + UDP-alpha-D-glucose = a flavonol 3-O-beta-D-glucoside + UDP + H(+)</text>
        <dbReference type="Rhea" id="RHEA:22300"/>
        <dbReference type="ChEBI" id="CHEBI:15378"/>
        <dbReference type="ChEBI" id="CHEBI:16816"/>
        <dbReference type="ChEBI" id="CHEBI:28802"/>
        <dbReference type="ChEBI" id="CHEBI:58223"/>
        <dbReference type="ChEBI" id="CHEBI:58885"/>
        <dbReference type="EC" id="2.4.1.91"/>
    </reaction>
</comment>
<comment type="catalytic activity">
    <reaction evidence="3">
        <text>a 7-O-hydroxy-flavonol + UDP-alpha-D-glucose = a flavonol 7-O-beta-D-glucoside + UDP + H(+)</text>
        <dbReference type="Rhea" id="RHEA:23164"/>
        <dbReference type="ChEBI" id="CHEBI:15378"/>
        <dbReference type="ChEBI" id="CHEBI:52144"/>
        <dbReference type="ChEBI" id="CHEBI:52267"/>
        <dbReference type="ChEBI" id="CHEBI:58223"/>
        <dbReference type="ChEBI" id="CHEBI:58885"/>
        <dbReference type="EC" id="2.4.1.237"/>
    </reaction>
</comment>
<comment type="similarity">
    <text evidence="5">Belongs to the UDP-glycosyltransferase family.</text>
</comment>
<comment type="sequence caution" evidence="5">
    <conflict type="erroneous initiation">
        <sequence resource="EMBL-CDS" id="CAB62336"/>
    </conflict>
    <text>Truncated N-terminus.</text>
</comment>
<feature type="chain" id="PRO_0000409095" description="Flavonol 3-O-glucosyltransferase UGT76E12">
    <location>
        <begin position="1"/>
        <end position="458"/>
    </location>
</feature>
<feature type="active site" description="Proton acceptor" evidence="1">
    <location>
        <position position="25"/>
    </location>
</feature>
<feature type="active site" description="Charge relay" evidence="1">
    <location>
        <position position="118"/>
    </location>
</feature>
<feature type="binding site" evidence="2">
    <location>
        <position position="25"/>
    </location>
    <ligand>
        <name>an anthocyanidin</name>
        <dbReference type="ChEBI" id="CHEBI:143576"/>
    </ligand>
</feature>
<feature type="binding site" evidence="1">
    <location>
        <position position="140"/>
    </location>
    <ligand>
        <name>UDP-alpha-D-glucose</name>
        <dbReference type="ChEBI" id="CHEBI:58885"/>
    </ligand>
</feature>
<feature type="binding site" evidence="1">
    <location>
        <position position="339"/>
    </location>
    <ligand>
        <name>UDP-alpha-D-glucose</name>
        <dbReference type="ChEBI" id="CHEBI:58885"/>
    </ligand>
</feature>
<feature type="binding site" evidence="1">
    <location>
        <position position="341"/>
    </location>
    <ligand>
        <name>UDP-alpha-D-glucose</name>
        <dbReference type="ChEBI" id="CHEBI:58885"/>
    </ligand>
</feature>
<feature type="binding site" evidence="1">
    <location>
        <position position="356"/>
    </location>
    <ligand>
        <name>UDP-alpha-D-glucose</name>
        <dbReference type="ChEBI" id="CHEBI:58885"/>
    </ligand>
</feature>
<feature type="binding site" evidence="1">
    <location>
        <position position="359"/>
    </location>
    <ligand>
        <name>UDP-alpha-D-glucose</name>
        <dbReference type="ChEBI" id="CHEBI:58885"/>
    </ligand>
</feature>
<feature type="binding site" evidence="1">
    <location>
        <position position="360"/>
    </location>
    <ligand>
        <name>UDP-alpha-D-glucose</name>
        <dbReference type="ChEBI" id="CHEBI:58885"/>
    </ligand>
</feature>
<feature type="binding site" evidence="1">
    <location>
        <position position="361"/>
    </location>
    <ligand>
        <name>UDP-alpha-D-glucose</name>
        <dbReference type="ChEBI" id="CHEBI:58885"/>
    </ligand>
</feature>
<feature type="binding site" evidence="1">
    <location>
        <position position="364"/>
    </location>
    <ligand>
        <name>UDP-alpha-D-glucose</name>
        <dbReference type="ChEBI" id="CHEBI:58885"/>
    </ligand>
</feature>
<feature type="binding site" evidence="2">
    <location>
        <position position="379"/>
    </location>
    <ligand>
        <name>an anthocyanidin</name>
        <dbReference type="ChEBI" id="CHEBI:143576"/>
    </ligand>
</feature>
<feature type="binding site" evidence="1">
    <location>
        <position position="380"/>
    </location>
    <ligand>
        <name>UDP-alpha-D-glucose</name>
        <dbReference type="ChEBI" id="CHEBI:58885"/>
    </ligand>
</feature>
<feature type="binding site" evidence="1">
    <location>
        <position position="381"/>
    </location>
    <ligand>
        <name>UDP-alpha-D-glucose</name>
        <dbReference type="ChEBI" id="CHEBI:58885"/>
    </ligand>
</feature>
<gene>
    <name evidence="4" type="primary">UGT76E12</name>
    <name evidence="6" type="ordered locus">At3g46660</name>
    <name evidence="7" type="ORF">F12A12.180</name>
</gene>
<protein>
    <recommendedName>
        <fullName evidence="5">Flavonol 3-O-glucosyltransferase UGT76E12</fullName>
        <ecNumber evidence="3">2.4.1.91</ecNumber>
    </recommendedName>
    <alternativeName>
        <fullName evidence="5">Flavonol 7-O-beta-glucosyltransferase UGT76E12</fullName>
        <ecNumber evidence="3">2.4.1.237</ecNumber>
    </alternativeName>
    <alternativeName>
        <fullName evidence="4">UDP-glycosyltransferase 76E12</fullName>
    </alternativeName>
</protein>
<proteinExistence type="evidence at protein level"/>
<reference key="1">
    <citation type="journal article" date="2000" name="Nature">
        <title>Sequence and analysis of chromosome 3 of the plant Arabidopsis thaliana.</title>
        <authorList>
            <person name="Salanoubat M."/>
            <person name="Lemcke K."/>
            <person name="Rieger M."/>
            <person name="Ansorge W."/>
            <person name="Unseld M."/>
            <person name="Fartmann B."/>
            <person name="Valle G."/>
            <person name="Bloecker H."/>
            <person name="Perez-Alonso M."/>
            <person name="Obermaier B."/>
            <person name="Delseny M."/>
            <person name="Boutry M."/>
            <person name="Grivell L.A."/>
            <person name="Mache R."/>
            <person name="Puigdomenech P."/>
            <person name="De Simone V."/>
            <person name="Choisne N."/>
            <person name="Artiguenave F."/>
            <person name="Robert C."/>
            <person name="Brottier P."/>
            <person name="Wincker P."/>
            <person name="Cattolico L."/>
            <person name="Weissenbach J."/>
            <person name="Saurin W."/>
            <person name="Quetier F."/>
            <person name="Schaefer M."/>
            <person name="Mueller-Auer S."/>
            <person name="Gabel C."/>
            <person name="Fuchs M."/>
            <person name="Benes V."/>
            <person name="Wurmbach E."/>
            <person name="Drzonek H."/>
            <person name="Erfle H."/>
            <person name="Jordan N."/>
            <person name="Bangert S."/>
            <person name="Wiedelmann R."/>
            <person name="Kranz H."/>
            <person name="Voss H."/>
            <person name="Holland R."/>
            <person name="Brandt P."/>
            <person name="Nyakatura G."/>
            <person name="Vezzi A."/>
            <person name="D'Angelo M."/>
            <person name="Pallavicini A."/>
            <person name="Toppo S."/>
            <person name="Simionati B."/>
            <person name="Conrad A."/>
            <person name="Hornischer K."/>
            <person name="Kauer G."/>
            <person name="Loehnert T.-H."/>
            <person name="Nordsiek G."/>
            <person name="Reichelt J."/>
            <person name="Scharfe M."/>
            <person name="Schoen O."/>
            <person name="Bargues M."/>
            <person name="Terol J."/>
            <person name="Climent J."/>
            <person name="Navarro P."/>
            <person name="Collado C."/>
            <person name="Perez-Perez A."/>
            <person name="Ottenwaelder B."/>
            <person name="Duchemin D."/>
            <person name="Cooke R."/>
            <person name="Laudie M."/>
            <person name="Berger-Llauro C."/>
            <person name="Purnelle B."/>
            <person name="Masuy D."/>
            <person name="de Haan M."/>
            <person name="Maarse A.C."/>
            <person name="Alcaraz J.-P."/>
            <person name="Cottet A."/>
            <person name="Casacuberta E."/>
            <person name="Monfort A."/>
            <person name="Argiriou A."/>
            <person name="Flores M."/>
            <person name="Liguori R."/>
            <person name="Vitale D."/>
            <person name="Mannhaupt G."/>
            <person name="Haase D."/>
            <person name="Schoof H."/>
            <person name="Rudd S."/>
            <person name="Zaccaria P."/>
            <person name="Mewes H.-W."/>
            <person name="Mayer K.F.X."/>
            <person name="Kaul S."/>
            <person name="Town C.D."/>
            <person name="Koo H.L."/>
            <person name="Tallon L.J."/>
            <person name="Jenkins J."/>
            <person name="Rooney T."/>
            <person name="Rizzo M."/>
            <person name="Walts A."/>
            <person name="Utterback T."/>
            <person name="Fujii C.Y."/>
            <person name="Shea T.P."/>
            <person name="Creasy T.H."/>
            <person name="Haas B."/>
            <person name="Maiti R."/>
            <person name="Wu D."/>
            <person name="Peterson J."/>
            <person name="Van Aken S."/>
            <person name="Pai G."/>
            <person name="Militscher J."/>
            <person name="Sellers P."/>
            <person name="Gill J.E."/>
            <person name="Feldblyum T.V."/>
            <person name="Preuss D."/>
            <person name="Lin X."/>
            <person name="Nierman W.C."/>
            <person name="Salzberg S.L."/>
            <person name="White O."/>
            <person name="Venter J.C."/>
            <person name="Fraser C.M."/>
            <person name="Kaneko T."/>
            <person name="Nakamura Y."/>
            <person name="Sato S."/>
            <person name="Kato T."/>
            <person name="Asamizu E."/>
            <person name="Sasamoto S."/>
            <person name="Kimura T."/>
            <person name="Idesawa K."/>
            <person name="Kawashima K."/>
            <person name="Kishida Y."/>
            <person name="Kiyokawa C."/>
            <person name="Kohara M."/>
            <person name="Matsumoto M."/>
            <person name="Matsuno A."/>
            <person name="Muraki A."/>
            <person name="Nakayama S."/>
            <person name="Nakazaki N."/>
            <person name="Shinpo S."/>
            <person name="Takeuchi C."/>
            <person name="Wada T."/>
            <person name="Watanabe A."/>
            <person name="Yamada M."/>
            <person name="Yasuda M."/>
            <person name="Tabata S."/>
        </authorList>
    </citation>
    <scope>NUCLEOTIDE SEQUENCE [LARGE SCALE GENOMIC DNA]</scope>
    <source>
        <strain>cv. Columbia</strain>
    </source>
</reference>
<reference key="2">
    <citation type="journal article" date="2017" name="Plant J.">
        <title>Araport11: a complete reannotation of the Arabidopsis thaliana reference genome.</title>
        <authorList>
            <person name="Cheng C.Y."/>
            <person name="Krishnakumar V."/>
            <person name="Chan A.P."/>
            <person name="Thibaud-Nissen F."/>
            <person name="Schobel S."/>
            <person name="Town C.D."/>
        </authorList>
    </citation>
    <scope>GENOME REANNOTATION</scope>
    <source>
        <strain>cv. Columbia</strain>
    </source>
</reference>
<reference key="3">
    <citation type="journal article" date="2003" name="Science">
        <title>Empirical analysis of transcriptional activity in the Arabidopsis genome.</title>
        <authorList>
            <person name="Yamada K."/>
            <person name="Lim J."/>
            <person name="Dale J.M."/>
            <person name="Chen H."/>
            <person name="Shinn P."/>
            <person name="Palm C.J."/>
            <person name="Southwick A.M."/>
            <person name="Wu H.C."/>
            <person name="Kim C.J."/>
            <person name="Nguyen M."/>
            <person name="Pham P.K."/>
            <person name="Cheuk R.F."/>
            <person name="Karlin-Newmann G."/>
            <person name="Liu S.X."/>
            <person name="Lam B."/>
            <person name="Sakano H."/>
            <person name="Wu T."/>
            <person name="Yu G."/>
            <person name="Miranda M."/>
            <person name="Quach H.L."/>
            <person name="Tripp M."/>
            <person name="Chang C.H."/>
            <person name="Lee J.M."/>
            <person name="Toriumi M.J."/>
            <person name="Chan M.M."/>
            <person name="Tang C.C."/>
            <person name="Onodera C.S."/>
            <person name="Deng J.M."/>
            <person name="Akiyama K."/>
            <person name="Ansari Y."/>
            <person name="Arakawa T."/>
            <person name="Banh J."/>
            <person name="Banno F."/>
            <person name="Bowser L."/>
            <person name="Brooks S.Y."/>
            <person name="Carninci P."/>
            <person name="Chao Q."/>
            <person name="Choy N."/>
            <person name="Enju A."/>
            <person name="Goldsmith A.D."/>
            <person name="Gurjal M."/>
            <person name="Hansen N.F."/>
            <person name="Hayashizaki Y."/>
            <person name="Johnson-Hopson C."/>
            <person name="Hsuan V.W."/>
            <person name="Iida K."/>
            <person name="Karnes M."/>
            <person name="Khan S."/>
            <person name="Koesema E."/>
            <person name="Ishida J."/>
            <person name="Jiang P.X."/>
            <person name="Jones T."/>
            <person name="Kawai J."/>
            <person name="Kamiya A."/>
            <person name="Meyers C."/>
            <person name="Nakajima M."/>
            <person name="Narusaka M."/>
            <person name="Seki M."/>
            <person name="Sakurai T."/>
            <person name="Satou M."/>
            <person name="Tamse R."/>
            <person name="Vaysberg M."/>
            <person name="Wallender E.K."/>
            <person name="Wong C."/>
            <person name="Yamamura Y."/>
            <person name="Yuan S."/>
            <person name="Shinozaki K."/>
            <person name="Davis R.W."/>
            <person name="Theologis A."/>
            <person name="Ecker J.R."/>
        </authorList>
    </citation>
    <scope>NUCLEOTIDE SEQUENCE [LARGE SCALE MRNA]</scope>
    <source>
        <strain>cv. Columbia</strain>
    </source>
</reference>
<reference key="4">
    <citation type="journal article" date="2001" name="J. Biol. Chem.">
        <title>Phylogenetic analysis of the UDP-glycosyltransferase multigene family of Arabidopsis thaliana.</title>
        <authorList>
            <person name="Li Y."/>
            <person name="Baldauf S."/>
            <person name="Lim E.K."/>
            <person name="Bowles D.J."/>
        </authorList>
    </citation>
    <scope>GENE FAMILY</scope>
</reference>
<reference key="5">
    <citation type="journal article" date="2004" name="Biotechnol. Bioeng.">
        <title>Arabidopsis glycosyltransferases as biocatalysts in fermentation for regioselective synthesis of diverse quercetin glucosides.</title>
        <authorList>
            <person name="Lim E.K."/>
            <person name="Ashford D.A."/>
            <person name="Hou B."/>
            <person name="Jackson R.G."/>
            <person name="Bowles D.J."/>
        </authorList>
    </citation>
    <scope>FUNCTION</scope>
    <scope>CATALYTIC ACTIVITY</scope>
</reference>
<organism>
    <name type="scientific">Arabidopsis thaliana</name>
    <name type="common">Mouse-ear cress</name>
    <dbReference type="NCBI Taxonomy" id="3702"/>
    <lineage>
        <taxon>Eukaryota</taxon>
        <taxon>Viridiplantae</taxon>
        <taxon>Streptophyta</taxon>
        <taxon>Embryophyta</taxon>
        <taxon>Tracheophyta</taxon>
        <taxon>Spermatophyta</taxon>
        <taxon>Magnoliopsida</taxon>
        <taxon>eudicotyledons</taxon>
        <taxon>Gunneridae</taxon>
        <taxon>Pentapetalae</taxon>
        <taxon>rosids</taxon>
        <taxon>malvids</taxon>
        <taxon>Brassicales</taxon>
        <taxon>Brassicaceae</taxon>
        <taxon>Camelineae</taxon>
        <taxon>Arabidopsis</taxon>
    </lineage>
</organism>
<evidence type="ECO:0000250" key="1">
    <source>
        <dbReference type="UniProtKB" id="A0A0A1HA03"/>
    </source>
</evidence>
<evidence type="ECO:0000250" key="2">
    <source>
        <dbReference type="UniProtKB" id="P51094"/>
    </source>
</evidence>
<evidence type="ECO:0000269" key="3">
    <source>
    </source>
</evidence>
<evidence type="ECO:0000303" key="4">
    <source>
    </source>
</evidence>
<evidence type="ECO:0000305" key="5"/>
<evidence type="ECO:0000312" key="6">
    <source>
        <dbReference type="Araport" id="AT3G46660"/>
    </source>
</evidence>
<evidence type="ECO:0000312" key="7">
    <source>
        <dbReference type="EMBL" id="CAB62336.1"/>
    </source>
</evidence>
<dbReference type="EC" id="2.4.1.91" evidence="3"/>
<dbReference type="EC" id="2.4.1.237" evidence="3"/>
<dbReference type="EMBL" id="AL133314">
    <property type="protein sequence ID" value="CAB62336.1"/>
    <property type="status" value="ALT_INIT"/>
    <property type="molecule type" value="Genomic_DNA"/>
</dbReference>
<dbReference type="EMBL" id="CP002686">
    <property type="protein sequence ID" value="AEE78190.1"/>
    <property type="molecule type" value="Genomic_DNA"/>
</dbReference>
<dbReference type="EMBL" id="AY048297">
    <property type="protein sequence ID" value="AAK82559.1"/>
    <property type="molecule type" value="mRNA"/>
</dbReference>
<dbReference type="EMBL" id="AY120731">
    <property type="protein sequence ID" value="AAM53289.1"/>
    <property type="molecule type" value="mRNA"/>
</dbReference>
<dbReference type="EMBL" id="BT000356">
    <property type="protein sequence ID" value="AAN15675.1"/>
    <property type="molecule type" value="mRNA"/>
</dbReference>
<dbReference type="EMBL" id="BT002638">
    <property type="protein sequence ID" value="AAO11554.1"/>
    <property type="molecule type" value="mRNA"/>
</dbReference>
<dbReference type="PIR" id="T45603">
    <property type="entry name" value="T45603"/>
</dbReference>
<dbReference type="RefSeq" id="NP_566885.1">
    <property type="nucleotide sequence ID" value="NM_114533.2"/>
</dbReference>
<dbReference type="SMR" id="Q94AB5"/>
<dbReference type="FunCoup" id="Q94AB5">
    <property type="interactions" value="215"/>
</dbReference>
<dbReference type="STRING" id="3702.Q94AB5"/>
<dbReference type="CAZy" id="GT1">
    <property type="family name" value="Glycosyltransferase Family 1"/>
</dbReference>
<dbReference type="iPTMnet" id="Q94AB5"/>
<dbReference type="PaxDb" id="3702-AT3G46660.1"/>
<dbReference type="ProteomicsDB" id="228677"/>
<dbReference type="EnsemblPlants" id="AT3G46660.1">
    <property type="protein sequence ID" value="AT3G46660.1"/>
    <property type="gene ID" value="AT3G46660"/>
</dbReference>
<dbReference type="GeneID" id="823819"/>
<dbReference type="Gramene" id="AT3G46660.1">
    <property type="protein sequence ID" value="AT3G46660.1"/>
    <property type="gene ID" value="AT3G46660"/>
</dbReference>
<dbReference type="KEGG" id="ath:AT3G46660"/>
<dbReference type="Araport" id="AT3G46660"/>
<dbReference type="TAIR" id="AT3G46660">
    <property type="gene designation" value="UGT76E12"/>
</dbReference>
<dbReference type="eggNOG" id="KOG1192">
    <property type="taxonomic scope" value="Eukaryota"/>
</dbReference>
<dbReference type="HOGENOM" id="CLU_001724_0_0_1"/>
<dbReference type="InParanoid" id="Q94AB5"/>
<dbReference type="OMA" id="WIESMPE"/>
<dbReference type="PhylomeDB" id="Q94AB5"/>
<dbReference type="PRO" id="PR:Q94AB5"/>
<dbReference type="Proteomes" id="UP000006548">
    <property type="component" value="Chromosome 3"/>
</dbReference>
<dbReference type="ExpressionAtlas" id="Q94AB5">
    <property type="expression patterns" value="baseline and differential"/>
</dbReference>
<dbReference type="GO" id="GO:0047893">
    <property type="term" value="F:flavonol 3-O-glucosyltransferase activity"/>
    <property type="evidence" value="ECO:0007669"/>
    <property type="project" value="UniProtKB-EC"/>
</dbReference>
<dbReference type="GO" id="GO:0033836">
    <property type="term" value="F:flavonol 7-O-beta-glucosyltransferase activity"/>
    <property type="evidence" value="ECO:0007669"/>
    <property type="project" value="UniProtKB-EC"/>
</dbReference>
<dbReference type="GO" id="GO:0080043">
    <property type="term" value="F:quercetin 3-O-glucosyltransferase activity"/>
    <property type="evidence" value="ECO:0000314"/>
    <property type="project" value="TAIR"/>
</dbReference>
<dbReference type="GO" id="GO:0080044">
    <property type="term" value="F:quercetin 7-O-glucosyltransferase activity"/>
    <property type="evidence" value="ECO:0000314"/>
    <property type="project" value="TAIR"/>
</dbReference>
<dbReference type="CDD" id="cd03784">
    <property type="entry name" value="GT1_Gtf-like"/>
    <property type="match status" value="1"/>
</dbReference>
<dbReference type="FunFam" id="3.40.50.2000:FF:000040">
    <property type="entry name" value="UDP-glycosyltransferase 76C1"/>
    <property type="match status" value="1"/>
</dbReference>
<dbReference type="FunFam" id="3.40.50.2000:FF:000151">
    <property type="entry name" value="UDP-glycosyltransferase 76E9"/>
    <property type="match status" value="1"/>
</dbReference>
<dbReference type="Gene3D" id="3.40.50.2000">
    <property type="entry name" value="Glycogen Phosphorylase B"/>
    <property type="match status" value="2"/>
</dbReference>
<dbReference type="InterPro" id="IPR002213">
    <property type="entry name" value="UDP_glucos_trans"/>
</dbReference>
<dbReference type="PANTHER" id="PTHR11926:SF1494">
    <property type="entry name" value="FLAVONOL 3-O-GLUCOSYLTRANSFERASE UGT76E12-RELATED"/>
    <property type="match status" value="1"/>
</dbReference>
<dbReference type="PANTHER" id="PTHR11926">
    <property type="entry name" value="GLUCOSYL/GLUCURONOSYL TRANSFERASES"/>
    <property type="match status" value="1"/>
</dbReference>
<dbReference type="Pfam" id="PF00201">
    <property type="entry name" value="UDPGT"/>
    <property type="match status" value="1"/>
</dbReference>
<dbReference type="SUPFAM" id="SSF53756">
    <property type="entry name" value="UDP-Glycosyltransferase/glycogen phosphorylase"/>
    <property type="match status" value="1"/>
</dbReference>
<sequence length="458" mass="51662">MQVLGMEEKPARRSVVLVPFPAQGHISPMMQLAKTLHLKGFSITVVQTKFNYFSPSDDFTHDFQFVTIPESLPESDFKNLGPIQFLFKLNKECKVSFKDCLGQLVLQQSNEISCVIYDEFMYFAEAAAKECKLPNIIFSTTSATAFACRSVFDKLYANNVQAPLKETKGQQEELVPEFYPLRYKDFPVSRFASLESIMEVYRNTVDKRTASSVIINTASCLESSSLSFLQQQQLQIPVYPIGPLHMVASAPTSLLEENKSCIEWLNKQKVNSVIYISMGSIALMEINEIMEVASGLAASNQHFLWVIRPGSIPGSEWIESMPEEFSKMVLDRGYIVKWAPQKEVLSHPAVGGFWSHCGWNSTLESIGQGVPMICRPFSGDQKVNARYLECVWKIGIQVEGELDRGVVERAVKRLMVDEEGEEMRKRAFSLKEQLRASVKSGGSSHNSLEEFVHFIRTL</sequence>